<comment type="function">
    <text evidence="1">Carrier of the growing fatty acid chain in fatty acid biosynthesis.</text>
</comment>
<comment type="pathway">
    <text evidence="1">Lipid metabolism; fatty acid biosynthesis.</text>
</comment>
<comment type="subcellular location">
    <subcellularLocation>
        <location evidence="1">Cytoplasm</location>
    </subcellularLocation>
</comment>
<comment type="PTM">
    <text evidence="1">4'-phosphopantetheine is transferred from CoA to a specific serine of apo-ACP by AcpS. This modification is essential for activity because fatty acids are bound in thioester linkage to the sulfhydryl of the prosthetic group.</text>
</comment>
<comment type="similarity">
    <text evidence="1">Belongs to the acyl carrier protein (ACP) family.</text>
</comment>
<organism>
    <name type="scientific">Phocaeicola vulgatus (strain ATCC 8482 / DSM 1447 / JCM 5826 / CCUG 4940 / NBRC 14291 / NCTC 11154)</name>
    <name type="common">Bacteroides vulgatus</name>
    <dbReference type="NCBI Taxonomy" id="435590"/>
    <lineage>
        <taxon>Bacteria</taxon>
        <taxon>Pseudomonadati</taxon>
        <taxon>Bacteroidota</taxon>
        <taxon>Bacteroidia</taxon>
        <taxon>Bacteroidales</taxon>
        <taxon>Bacteroidaceae</taxon>
        <taxon>Phocaeicola</taxon>
    </lineage>
</organism>
<evidence type="ECO:0000255" key="1">
    <source>
        <dbReference type="HAMAP-Rule" id="MF_01217"/>
    </source>
</evidence>
<evidence type="ECO:0000255" key="2">
    <source>
        <dbReference type="PROSITE-ProRule" id="PRU00258"/>
    </source>
</evidence>
<gene>
    <name evidence="1" type="primary">acpP</name>
    <name type="ordered locus">BVU_1051</name>
</gene>
<keyword id="KW-0963">Cytoplasm</keyword>
<keyword id="KW-0275">Fatty acid biosynthesis</keyword>
<keyword id="KW-0276">Fatty acid metabolism</keyword>
<keyword id="KW-0444">Lipid biosynthesis</keyword>
<keyword id="KW-0443">Lipid metabolism</keyword>
<keyword id="KW-0596">Phosphopantetheine</keyword>
<keyword id="KW-0597">Phosphoprotein</keyword>
<feature type="chain" id="PRO_1000066558" description="Acyl carrier protein">
    <location>
        <begin position="1"/>
        <end position="78"/>
    </location>
</feature>
<feature type="domain" description="Carrier" evidence="2">
    <location>
        <begin position="2"/>
        <end position="77"/>
    </location>
</feature>
<feature type="modified residue" description="O-(pantetheine 4'-phosphoryl)serine" evidence="2">
    <location>
        <position position="37"/>
    </location>
</feature>
<reference key="1">
    <citation type="journal article" date="2007" name="PLoS Biol.">
        <title>Evolution of symbiotic bacteria in the distal human intestine.</title>
        <authorList>
            <person name="Xu J."/>
            <person name="Mahowald M.A."/>
            <person name="Ley R.E."/>
            <person name="Lozupone C.A."/>
            <person name="Hamady M."/>
            <person name="Martens E.C."/>
            <person name="Henrissat B."/>
            <person name="Coutinho P.M."/>
            <person name="Minx P."/>
            <person name="Latreille P."/>
            <person name="Cordum H."/>
            <person name="Van Brunt A."/>
            <person name="Kim K."/>
            <person name="Fulton R.S."/>
            <person name="Fulton L.A."/>
            <person name="Clifton S.W."/>
            <person name="Wilson R.K."/>
            <person name="Knight R.D."/>
            <person name="Gordon J.I."/>
        </authorList>
    </citation>
    <scope>NUCLEOTIDE SEQUENCE [LARGE SCALE GENOMIC DNA]</scope>
    <source>
        <strain>ATCC 8482 / DSM 1447 / JCM 5826 / CCUG 4940 / NBRC 14291 / NCTC 11154</strain>
    </source>
</reference>
<protein>
    <recommendedName>
        <fullName evidence="1">Acyl carrier protein</fullName>
        <shortName evidence="1">ACP</shortName>
    </recommendedName>
</protein>
<dbReference type="EMBL" id="CP000139">
    <property type="protein sequence ID" value="ABR38742.1"/>
    <property type="molecule type" value="Genomic_DNA"/>
</dbReference>
<dbReference type="RefSeq" id="WP_005844276.1">
    <property type="nucleotide sequence ID" value="NZ_JANSWM010000124.1"/>
</dbReference>
<dbReference type="SMR" id="A6KZ78"/>
<dbReference type="STRING" id="435590.BVU_1051"/>
<dbReference type="PaxDb" id="435590-BVU_1051"/>
<dbReference type="KEGG" id="bvu:BVU_1051"/>
<dbReference type="eggNOG" id="COG0236">
    <property type="taxonomic scope" value="Bacteria"/>
</dbReference>
<dbReference type="HOGENOM" id="CLU_108696_5_1_10"/>
<dbReference type="BioCyc" id="BVUL435590:G1G59-1095-MONOMER"/>
<dbReference type="UniPathway" id="UPA00094"/>
<dbReference type="Proteomes" id="UP000002861">
    <property type="component" value="Chromosome"/>
</dbReference>
<dbReference type="GO" id="GO:0005829">
    <property type="term" value="C:cytosol"/>
    <property type="evidence" value="ECO:0007669"/>
    <property type="project" value="TreeGrafter"/>
</dbReference>
<dbReference type="GO" id="GO:0016020">
    <property type="term" value="C:membrane"/>
    <property type="evidence" value="ECO:0007669"/>
    <property type="project" value="GOC"/>
</dbReference>
<dbReference type="GO" id="GO:0000035">
    <property type="term" value="F:acyl binding"/>
    <property type="evidence" value="ECO:0007669"/>
    <property type="project" value="TreeGrafter"/>
</dbReference>
<dbReference type="GO" id="GO:0000036">
    <property type="term" value="F:acyl carrier activity"/>
    <property type="evidence" value="ECO:0007669"/>
    <property type="project" value="UniProtKB-UniRule"/>
</dbReference>
<dbReference type="GO" id="GO:0031177">
    <property type="term" value="F:phosphopantetheine binding"/>
    <property type="evidence" value="ECO:0007669"/>
    <property type="project" value="InterPro"/>
</dbReference>
<dbReference type="GO" id="GO:0009245">
    <property type="term" value="P:lipid A biosynthetic process"/>
    <property type="evidence" value="ECO:0007669"/>
    <property type="project" value="TreeGrafter"/>
</dbReference>
<dbReference type="FunFam" id="1.10.1200.10:FF:000001">
    <property type="entry name" value="Acyl carrier protein"/>
    <property type="match status" value="1"/>
</dbReference>
<dbReference type="Gene3D" id="1.10.1200.10">
    <property type="entry name" value="ACP-like"/>
    <property type="match status" value="1"/>
</dbReference>
<dbReference type="HAMAP" id="MF_01217">
    <property type="entry name" value="Acyl_carrier"/>
    <property type="match status" value="1"/>
</dbReference>
<dbReference type="InterPro" id="IPR003231">
    <property type="entry name" value="ACP"/>
</dbReference>
<dbReference type="InterPro" id="IPR036736">
    <property type="entry name" value="ACP-like_sf"/>
</dbReference>
<dbReference type="InterPro" id="IPR020806">
    <property type="entry name" value="PKS_PP-bd"/>
</dbReference>
<dbReference type="InterPro" id="IPR009081">
    <property type="entry name" value="PP-bd_ACP"/>
</dbReference>
<dbReference type="InterPro" id="IPR006162">
    <property type="entry name" value="Ppantetheine_attach_site"/>
</dbReference>
<dbReference type="NCBIfam" id="TIGR00517">
    <property type="entry name" value="acyl_carrier"/>
    <property type="match status" value="1"/>
</dbReference>
<dbReference type="NCBIfam" id="NF002148">
    <property type="entry name" value="PRK00982.1-2"/>
    <property type="match status" value="1"/>
</dbReference>
<dbReference type="NCBIfam" id="NF002149">
    <property type="entry name" value="PRK00982.1-3"/>
    <property type="match status" value="1"/>
</dbReference>
<dbReference type="NCBIfam" id="NF002150">
    <property type="entry name" value="PRK00982.1-4"/>
    <property type="match status" value="1"/>
</dbReference>
<dbReference type="NCBIfam" id="NF002151">
    <property type="entry name" value="PRK00982.1-5"/>
    <property type="match status" value="1"/>
</dbReference>
<dbReference type="PANTHER" id="PTHR20863">
    <property type="entry name" value="ACYL CARRIER PROTEIN"/>
    <property type="match status" value="1"/>
</dbReference>
<dbReference type="PANTHER" id="PTHR20863:SF76">
    <property type="entry name" value="CARRIER DOMAIN-CONTAINING PROTEIN"/>
    <property type="match status" value="1"/>
</dbReference>
<dbReference type="Pfam" id="PF00550">
    <property type="entry name" value="PP-binding"/>
    <property type="match status" value="1"/>
</dbReference>
<dbReference type="SMART" id="SM00823">
    <property type="entry name" value="PKS_PP"/>
    <property type="match status" value="1"/>
</dbReference>
<dbReference type="SUPFAM" id="SSF47336">
    <property type="entry name" value="ACP-like"/>
    <property type="match status" value="1"/>
</dbReference>
<dbReference type="PROSITE" id="PS50075">
    <property type="entry name" value="CARRIER"/>
    <property type="match status" value="1"/>
</dbReference>
<dbReference type="PROSITE" id="PS00012">
    <property type="entry name" value="PHOSPHOPANTETHEINE"/>
    <property type="match status" value="1"/>
</dbReference>
<sequence>MSEIASRVKAIIVDKLGVEESEVTTEASFTNDLGADSLDTVELIMEFEKEFGISIPDDQAEKIGTVGDAVSYIEANAK</sequence>
<name>ACP_PHOV8</name>
<proteinExistence type="inferred from homology"/>
<accession>A6KZ78</accession>